<name>CYB_LEPAM</name>
<protein>
    <recommendedName>
        <fullName>Cytochrome b</fullName>
    </recommendedName>
    <alternativeName>
        <fullName>Complex III subunit 3</fullName>
    </alternativeName>
    <alternativeName>
        <fullName>Complex III subunit III</fullName>
    </alternativeName>
    <alternativeName>
        <fullName>Cytochrome b-c1 complex subunit 3</fullName>
    </alternativeName>
    <alternativeName>
        <fullName>Ubiquinol-cytochrome-c reductase complex cytochrome b subunit</fullName>
    </alternativeName>
</protein>
<proteinExistence type="inferred from homology"/>
<geneLocation type="mitochondrion"/>
<organism>
    <name type="scientific">Lepus americanus</name>
    <name type="common">Snowshoe hare</name>
    <dbReference type="NCBI Taxonomy" id="48086"/>
    <lineage>
        <taxon>Eukaryota</taxon>
        <taxon>Metazoa</taxon>
        <taxon>Chordata</taxon>
        <taxon>Craniata</taxon>
        <taxon>Vertebrata</taxon>
        <taxon>Euteleostomi</taxon>
        <taxon>Mammalia</taxon>
        <taxon>Eutheria</taxon>
        <taxon>Euarchontoglires</taxon>
        <taxon>Glires</taxon>
        <taxon>Lagomorpha</taxon>
        <taxon>Leporidae</taxon>
        <taxon>Lepus</taxon>
    </lineage>
</organism>
<reference key="1">
    <citation type="journal article" date="2004" name="Syst. Biol.">
        <title>A molecular supermatrix of the rabbits and hares (Leporidae) allows for the identification of five intercontinental exchanges during the Miocene.</title>
        <authorList>
            <person name="Matthee C.A."/>
            <person name="van Vuuren B.J."/>
            <person name="Bell D."/>
            <person name="Robinson T.J."/>
        </authorList>
    </citation>
    <scope>NUCLEOTIDE SEQUENCE [GENOMIC DNA]</scope>
</reference>
<reference key="2">
    <citation type="submission" date="1997-06" db="EMBL/GenBank/DDBJ databases">
        <title>Cytochrome b phylogeny of North American hares and jackrabbits (Lepus, Lagomorpha) and the effects of mutational saturation in outgroup taxa.</title>
        <authorList>
            <person name="Halanych K.M."/>
            <person name="Demboski J.R."/>
            <person name="van Vuuren B.J."/>
            <person name="Klein D.R."/>
            <person name="Cook J.A."/>
        </authorList>
    </citation>
    <scope>NUCLEOTIDE SEQUENCE [GENOMIC DNA] OF 1-234</scope>
    <source>
        <strain>Isolate AF 20297</strain>
    </source>
</reference>
<dbReference type="EMBL" id="AY292733">
    <property type="protein sequence ID" value="AAS54929.1"/>
    <property type="molecule type" value="Genomic_DNA"/>
</dbReference>
<dbReference type="EMBL" id="AF010152">
    <property type="protein sequence ID" value="AAB94492.1"/>
    <property type="molecule type" value="Genomic_DNA"/>
</dbReference>
<dbReference type="SMR" id="O47554"/>
<dbReference type="GO" id="GO:0005743">
    <property type="term" value="C:mitochondrial inner membrane"/>
    <property type="evidence" value="ECO:0007669"/>
    <property type="project" value="UniProtKB-SubCell"/>
</dbReference>
<dbReference type="GO" id="GO:0045275">
    <property type="term" value="C:respiratory chain complex III"/>
    <property type="evidence" value="ECO:0007669"/>
    <property type="project" value="InterPro"/>
</dbReference>
<dbReference type="GO" id="GO:0046872">
    <property type="term" value="F:metal ion binding"/>
    <property type="evidence" value="ECO:0007669"/>
    <property type="project" value="UniProtKB-KW"/>
</dbReference>
<dbReference type="GO" id="GO:0008121">
    <property type="term" value="F:ubiquinol-cytochrome-c reductase activity"/>
    <property type="evidence" value="ECO:0007669"/>
    <property type="project" value="InterPro"/>
</dbReference>
<dbReference type="GO" id="GO:0006122">
    <property type="term" value="P:mitochondrial electron transport, ubiquinol to cytochrome c"/>
    <property type="evidence" value="ECO:0007669"/>
    <property type="project" value="TreeGrafter"/>
</dbReference>
<dbReference type="CDD" id="cd00290">
    <property type="entry name" value="cytochrome_b_C"/>
    <property type="match status" value="1"/>
</dbReference>
<dbReference type="CDD" id="cd00284">
    <property type="entry name" value="Cytochrome_b_N"/>
    <property type="match status" value="1"/>
</dbReference>
<dbReference type="FunFam" id="1.20.810.10:FF:000002">
    <property type="entry name" value="Cytochrome b"/>
    <property type="match status" value="1"/>
</dbReference>
<dbReference type="Gene3D" id="1.20.810.10">
    <property type="entry name" value="Cytochrome Bc1 Complex, Chain C"/>
    <property type="match status" value="1"/>
</dbReference>
<dbReference type="InterPro" id="IPR005798">
    <property type="entry name" value="Cyt_b/b6_C"/>
</dbReference>
<dbReference type="InterPro" id="IPR036150">
    <property type="entry name" value="Cyt_b/b6_C_sf"/>
</dbReference>
<dbReference type="InterPro" id="IPR005797">
    <property type="entry name" value="Cyt_b/b6_N"/>
</dbReference>
<dbReference type="InterPro" id="IPR027387">
    <property type="entry name" value="Cytb/b6-like_sf"/>
</dbReference>
<dbReference type="InterPro" id="IPR030689">
    <property type="entry name" value="Cytochrome_b"/>
</dbReference>
<dbReference type="InterPro" id="IPR048260">
    <property type="entry name" value="Cytochrome_b_C_euk/bac"/>
</dbReference>
<dbReference type="InterPro" id="IPR048259">
    <property type="entry name" value="Cytochrome_b_N_euk/bac"/>
</dbReference>
<dbReference type="InterPro" id="IPR016174">
    <property type="entry name" value="Di-haem_cyt_TM"/>
</dbReference>
<dbReference type="PANTHER" id="PTHR19271">
    <property type="entry name" value="CYTOCHROME B"/>
    <property type="match status" value="1"/>
</dbReference>
<dbReference type="PANTHER" id="PTHR19271:SF16">
    <property type="entry name" value="CYTOCHROME B"/>
    <property type="match status" value="1"/>
</dbReference>
<dbReference type="Pfam" id="PF00032">
    <property type="entry name" value="Cytochrom_B_C"/>
    <property type="match status" value="1"/>
</dbReference>
<dbReference type="Pfam" id="PF00033">
    <property type="entry name" value="Cytochrome_B"/>
    <property type="match status" value="1"/>
</dbReference>
<dbReference type="PIRSF" id="PIRSF038885">
    <property type="entry name" value="COB"/>
    <property type="match status" value="1"/>
</dbReference>
<dbReference type="SUPFAM" id="SSF81648">
    <property type="entry name" value="a domain/subunit of cytochrome bc1 complex (Ubiquinol-cytochrome c reductase)"/>
    <property type="match status" value="1"/>
</dbReference>
<dbReference type="SUPFAM" id="SSF81342">
    <property type="entry name" value="Transmembrane di-heme cytochromes"/>
    <property type="match status" value="1"/>
</dbReference>
<dbReference type="PROSITE" id="PS51003">
    <property type="entry name" value="CYTB_CTER"/>
    <property type="match status" value="1"/>
</dbReference>
<dbReference type="PROSITE" id="PS51002">
    <property type="entry name" value="CYTB_NTER"/>
    <property type="match status" value="1"/>
</dbReference>
<comment type="function">
    <text evidence="2">Component of the ubiquinol-cytochrome c reductase complex (complex III or cytochrome b-c1 complex) that is part of the mitochondrial respiratory chain. The b-c1 complex mediates electron transfer from ubiquinol to cytochrome c. Contributes to the generation of a proton gradient across the mitochondrial membrane that is then used for ATP synthesis.</text>
</comment>
<comment type="cofactor">
    <cofactor evidence="2">
        <name>heme b</name>
        <dbReference type="ChEBI" id="CHEBI:60344"/>
    </cofactor>
    <text evidence="2">Binds 2 heme b groups non-covalently.</text>
</comment>
<comment type="subunit">
    <text evidence="2">The cytochrome bc1 complex contains 11 subunits: 3 respiratory subunits (MT-CYB, CYC1 and UQCRFS1), 2 core proteins (UQCRC1 and UQCRC2) and 6 low-molecular weight proteins (UQCRH/QCR6, UQCRB/QCR7, UQCRQ/QCR8, UQCR10/QCR9, UQCR11/QCR10 and a cleavage product of UQCRFS1). This cytochrome bc1 complex then forms a dimer.</text>
</comment>
<comment type="subcellular location">
    <subcellularLocation>
        <location evidence="2">Mitochondrion inner membrane</location>
        <topology evidence="2">Multi-pass membrane protein</topology>
    </subcellularLocation>
</comment>
<comment type="miscellaneous">
    <text evidence="1">Heme 1 (or BL or b562) is low-potential and absorbs at about 562 nm, and heme 2 (or BH or b566) is high-potential and absorbs at about 566 nm.</text>
</comment>
<comment type="similarity">
    <text evidence="3 4">Belongs to the cytochrome b family.</text>
</comment>
<comment type="caution">
    <text evidence="2">The full-length protein contains only eight transmembrane helices, not nine as predicted by bioinformatics tools.</text>
</comment>
<feature type="chain" id="PRO_0000061097" description="Cytochrome b">
    <location>
        <begin position="1"/>
        <end position="379"/>
    </location>
</feature>
<feature type="transmembrane region" description="Helical" evidence="2">
    <location>
        <begin position="33"/>
        <end position="53"/>
    </location>
</feature>
<feature type="transmembrane region" description="Helical" evidence="2">
    <location>
        <begin position="77"/>
        <end position="98"/>
    </location>
</feature>
<feature type="transmembrane region" description="Helical" evidence="2">
    <location>
        <begin position="113"/>
        <end position="133"/>
    </location>
</feature>
<feature type="transmembrane region" description="Helical" evidence="2">
    <location>
        <begin position="178"/>
        <end position="198"/>
    </location>
</feature>
<feature type="transmembrane region" description="Helical" evidence="2">
    <location>
        <begin position="226"/>
        <end position="246"/>
    </location>
</feature>
<feature type="transmembrane region" description="Helical" evidence="2">
    <location>
        <begin position="288"/>
        <end position="308"/>
    </location>
</feature>
<feature type="transmembrane region" description="Helical" evidence="2">
    <location>
        <begin position="320"/>
        <end position="340"/>
    </location>
</feature>
<feature type="transmembrane region" description="Helical" evidence="2">
    <location>
        <begin position="347"/>
        <end position="367"/>
    </location>
</feature>
<feature type="binding site" description="axial binding residue" evidence="2">
    <location>
        <position position="83"/>
    </location>
    <ligand>
        <name>heme b</name>
        <dbReference type="ChEBI" id="CHEBI:60344"/>
        <label>b562</label>
    </ligand>
    <ligandPart>
        <name>Fe</name>
        <dbReference type="ChEBI" id="CHEBI:18248"/>
    </ligandPart>
</feature>
<feature type="binding site" description="axial binding residue" evidence="2">
    <location>
        <position position="97"/>
    </location>
    <ligand>
        <name>heme b</name>
        <dbReference type="ChEBI" id="CHEBI:60344"/>
        <label>b566</label>
    </ligand>
    <ligandPart>
        <name>Fe</name>
        <dbReference type="ChEBI" id="CHEBI:18248"/>
    </ligandPart>
</feature>
<feature type="binding site" description="axial binding residue" evidence="2">
    <location>
        <position position="182"/>
    </location>
    <ligand>
        <name>heme b</name>
        <dbReference type="ChEBI" id="CHEBI:60344"/>
        <label>b562</label>
    </ligand>
    <ligandPart>
        <name>Fe</name>
        <dbReference type="ChEBI" id="CHEBI:18248"/>
    </ligandPart>
</feature>
<feature type="binding site" description="axial binding residue" evidence="2">
    <location>
        <position position="196"/>
    </location>
    <ligand>
        <name>heme b</name>
        <dbReference type="ChEBI" id="CHEBI:60344"/>
        <label>b566</label>
    </ligand>
    <ligandPart>
        <name>Fe</name>
        <dbReference type="ChEBI" id="CHEBI:18248"/>
    </ligandPart>
</feature>
<feature type="binding site" evidence="2">
    <location>
        <position position="201"/>
    </location>
    <ligand>
        <name>a ubiquinone</name>
        <dbReference type="ChEBI" id="CHEBI:16389"/>
    </ligand>
</feature>
<keyword id="KW-0249">Electron transport</keyword>
<keyword id="KW-0349">Heme</keyword>
<keyword id="KW-0408">Iron</keyword>
<keyword id="KW-0472">Membrane</keyword>
<keyword id="KW-0479">Metal-binding</keyword>
<keyword id="KW-0496">Mitochondrion</keyword>
<keyword id="KW-0999">Mitochondrion inner membrane</keyword>
<keyword id="KW-0679">Respiratory chain</keyword>
<keyword id="KW-0812">Transmembrane</keyword>
<keyword id="KW-1133">Transmembrane helix</keyword>
<keyword id="KW-0813">Transport</keyword>
<keyword id="KW-0830">Ubiquinone</keyword>
<evidence type="ECO:0000250" key="1"/>
<evidence type="ECO:0000250" key="2">
    <source>
        <dbReference type="UniProtKB" id="P00157"/>
    </source>
</evidence>
<evidence type="ECO:0000255" key="3">
    <source>
        <dbReference type="PROSITE-ProRule" id="PRU00967"/>
    </source>
</evidence>
<evidence type="ECO:0000255" key="4">
    <source>
        <dbReference type="PROSITE-ProRule" id="PRU00968"/>
    </source>
</evidence>
<sequence>MTNIRKTHPLLKIVNHSLIDLPAPSNISAWWNFGSLLGLCLMIQILTGLFLAMHYTSDTATAFSSVTHICRDVNYGWLIRYLHANGASMFFICLYMHVGRGIYYGSYTYLETWNIGIVLLFAVMATAFMGYVLPWGQMSFWGATVITNFLSAIPYIGTTLVEWIWGGFSVDKATLTRFFAFHFILPFIIAALVMIHLLFLHETGSNNPSGIPSDSDKIPFHPYYTIKDVLGFLMLILLPLLLLLFSPDFLGDPDNYTPANPLNTPPHIKPEWYFLFAYAILRSIPNKLGGVLALVMSILILAIIPFLHMSKQRSMMFRPISQVLFWILVADLLTLTWIGGQPVEHPFITIGQVASILYFSIILILMPLASLIENKILKW</sequence>
<accession>O47554</accession>
<accession>Q6ELV1</accession>
<gene>
    <name type="primary">MT-CYB</name>
    <name type="synonym">COB</name>
    <name type="synonym">CYTB</name>
    <name type="synonym">MTCYB</name>
</gene>